<accession>I1RR90</accession>
<accession>A0A098DNK6</accession>
<dbReference type="EC" id="1.3.1.70" evidence="9"/>
<dbReference type="EMBL" id="HG970335">
    <property type="protein sequence ID" value="CEF82929.1"/>
    <property type="molecule type" value="Genomic_DNA"/>
</dbReference>
<dbReference type="RefSeq" id="XP_011326222.1">
    <property type="nucleotide sequence ID" value="XM_011327920.1"/>
</dbReference>
<dbReference type="SMR" id="I1RR90"/>
<dbReference type="FunCoup" id="I1RR90">
    <property type="interactions" value="498"/>
</dbReference>
<dbReference type="STRING" id="229533.I1RR90"/>
<dbReference type="GlyCosmos" id="I1RR90">
    <property type="glycosylation" value="1 site, No reported glycans"/>
</dbReference>
<dbReference type="KEGG" id="fgr:FGSG_06606"/>
<dbReference type="VEuPathDB" id="FungiDB:FGRAMPH1_01G22691"/>
<dbReference type="eggNOG" id="KOG1435">
    <property type="taxonomic scope" value="Eukaryota"/>
</dbReference>
<dbReference type="HOGENOM" id="CLU_015631_0_3_1"/>
<dbReference type="InParanoid" id="I1RR90"/>
<dbReference type="OrthoDB" id="12495at110618"/>
<dbReference type="UniPathway" id="UPA00768"/>
<dbReference type="Proteomes" id="UP000070720">
    <property type="component" value="Chromosome 4"/>
</dbReference>
<dbReference type="GO" id="GO:0005789">
    <property type="term" value="C:endoplasmic reticulum membrane"/>
    <property type="evidence" value="ECO:0007669"/>
    <property type="project" value="UniProtKB-SubCell"/>
</dbReference>
<dbReference type="GO" id="GO:0050613">
    <property type="term" value="F:Delta14-sterol reductase activity"/>
    <property type="evidence" value="ECO:0007669"/>
    <property type="project" value="UniProtKB-ARBA"/>
</dbReference>
<dbReference type="GO" id="GO:0006696">
    <property type="term" value="P:ergosterol biosynthetic process"/>
    <property type="evidence" value="ECO:0007669"/>
    <property type="project" value="TreeGrafter"/>
</dbReference>
<dbReference type="Gene3D" id="1.20.120.1630">
    <property type="match status" value="1"/>
</dbReference>
<dbReference type="InterPro" id="IPR001171">
    <property type="entry name" value="ERG24_DHCR-like"/>
</dbReference>
<dbReference type="InterPro" id="IPR018083">
    <property type="entry name" value="Sterol_reductase_CS"/>
</dbReference>
<dbReference type="PANTHER" id="PTHR21257">
    <property type="entry name" value="DELTA(14)-STEROL REDUCTASE"/>
    <property type="match status" value="1"/>
</dbReference>
<dbReference type="PANTHER" id="PTHR21257:SF52">
    <property type="entry name" value="DELTA(14)-STEROL REDUCTASE TM7SF2"/>
    <property type="match status" value="1"/>
</dbReference>
<dbReference type="Pfam" id="PF01222">
    <property type="entry name" value="ERG4_ERG24"/>
    <property type="match status" value="1"/>
</dbReference>
<dbReference type="PROSITE" id="PS01017">
    <property type="entry name" value="STEROL_REDUCT_1"/>
    <property type="match status" value="1"/>
</dbReference>
<dbReference type="PROSITE" id="PS01018">
    <property type="entry name" value="STEROL_REDUCT_2"/>
    <property type="match status" value="1"/>
</dbReference>
<evidence type="ECO:0000250" key="1">
    <source>
        <dbReference type="UniProtKB" id="Q4WKA5"/>
    </source>
</evidence>
<evidence type="ECO:0000255" key="2"/>
<evidence type="ECO:0000255" key="3">
    <source>
        <dbReference type="PROSITE-ProRule" id="PRU00498"/>
    </source>
</evidence>
<evidence type="ECO:0000269" key="4">
    <source>
    </source>
</evidence>
<evidence type="ECO:0000269" key="5">
    <source>
    </source>
</evidence>
<evidence type="ECO:0000269" key="6">
    <source>
    </source>
</evidence>
<evidence type="ECO:0000303" key="7">
    <source>
    </source>
</evidence>
<evidence type="ECO:0000305" key="8"/>
<evidence type="ECO:0000305" key="9">
    <source>
    </source>
</evidence>
<gene>
    <name evidence="7" type="primary">ERG24A</name>
    <name type="ORF">FG06606</name>
    <name type="ORF">FGRAMPH1_01T22691</name>
</gene>
<proteinExistence type="evidence at transcript level"/>
<name>ER24A_GIBZE</name>
<feature type="chain" id="PRO_0000454359" description="Delta(14)-sterol reductase ERG24A">
    <location>
        <begin position="1"/>
        <end position="485"/>
    </location>
</feature>
<feature type="transmembrane region" description="Helical" evidence="2">
    <location>
        <begin position="18"/>
        <end position="38"/>
    </location>
</feature>
<feature type="transmembrane region" description="Helical" evidence="2">
    <location>
        <begin position="77"/>
        <end position="97"/>
    </location>
</feature>
<feature type="transmembrane region" description="Helical" evidence="2">
    <location>
        <begin position="131"/>
        <end position="151"/>
    </location>
</feature>
<feature type="transmembrane region" description="Helical" evidence="2">
    <location>
        <begin position="155"/>
        <end position="175"/>
    </location>
</feature>
<feature type="transmembrane region" description="Helical" evidence="2">
    <location>
        <begin position="259"/>
        <end position="279"/>
    </location>
</feature>
<feature type="transmembrane region" description="Helical" evidence="2">
    <location>
        <begin position="285"/>
        <end position="305"/>
    </location>
</feature>
<feature type="transmembrane region" description="Helical" evidence="2">
    <location>
        <begin position="319"/>
        <end position="339"/>
    </location>
</feature>
<feature type="transmembrane region" description="Helical" evidence="2">
    <location>
        <begin position="431"/>
        <end position="451"/>
    </location>
</feature>
<feature type="glycosylation site" description="N-linked (GlcNAc...) asparagine" evidence="3">
    <location>
        <position position="240"/>
    </location>
</feature>
<sequence length="485" mass="54819">MAVKPKQPPAQEQHGYEFFGPPGAFAISFFLPVLVYVFNFVCNDISGCPAPSLLQPKTFSLDALKQEVGWPHNGVAGLVSWNGTLAVIGYNVLSLILYRVLPAIEVEGTQLSSGGRLKYRFNTLYSSTFTLAVLAAGTIAQGAEFPVWTFMSENFIQILSANIIYSYLVSTFVYVRSFSVKHGNKENRELAAGGHSGNILYDWFIGRELNPRIEIPLIGEVDIKEFLELRPGMMGWIIMNCSWCAQQYRNYGFVTDSSILITAVQALYVFDSWWNEPAILTTMDITTDGFGMMLAFGDIVWVPYVYSLQTRYLSVHPVSLGPLGLAAMLGLIGLGFYIFRSANNEKNRFRTNPNDPRVSHLKYIQTKTGSKLLTTGWWGMSRHINYLGDWIQSWPYCLPTGLAGYQIMSAGANIEGAYVMHDGREVVQGEAQGWGMLITYFYILYFGILLIHRERRDDEKCHRKYGKDWEEYRKIVRSRIVPGLY</sequence>
<comment type="function">
    <text evidence="1 4 9">Delta(14)-sterol reductase; part of the third module of ergosterol biosynthesis pathway that includes the late steps of the pathway (PubMed:21436218). Catalyzes the reduction of the C14=C15 double bond within 4,4,24-trimethyl ergosta-8,14,24(28)-trienolto produce 4,4-dimethylfecosterol (By similarity). The third module or late pathway involves the ergosterol synthesis itself through consecutive reactions that mainly occur in the endoplasmic reticulum (ER) membrane. Firstly, the squalene synthase ERG9 catalyzes the condensation of 2 farnesyl pyrophosphate moieties to form squalene, which is the precursor of all steroids. Squalene synthase is crucial for balancing the incorporation of farnesyl diphosphate (FPP) into sterol and nonsterol isoprene synthesis. Secondly, squalene is converted into lanosterol by the consecutive action of the squalene epoxidase ERG1 and the lanosterol synthase ERG7. Then, the delta(24)-sterol C-methyltransferase ERG6 methylates lanosterol at C-24 to produce eburicol. Eburicol is the substrate of the sterol 14-alpha demethylase encoded by CYP51A, CYP51B and CYP51C, to yield 4,4,24-trimethyl ergosta-8,14,24(28)-trienol. CYP51B encodes the enzyme primarily responsible for sterol 14-alpha-demethylation, and plays an essential role in ascospore formation. CYP51A encodes an additional sterol 14-alpha-demethylase, induced on ergosterol depletion and responsible for the intrinsic variation in azole sensitivity. The third CYP51 isoform, CYP51C, does not encode a sterol 14-alpha-demethylase, but is required for full virulence on host wheat ears. The C-14 reductase ERG24 then reduces the C14=C15 double bond which leads to 4,4-dimethylfecosterol. A sequence of further demethylations at C-4, involving the C-4 demethylation complex containing the C-4 methylsterol oxidases ERG25, the sterol-4-alpha-carboxylate 3-dehydrogenase ERG26 and the 3-keto-steroid reductase ERG27, leads to the production of fecosterol via 4-methylfecosterol. ERG28 has a role as a scaffold to help anchor ERG25, ERG26 and ERG27 to the endoplasmic reticulum. The C-8 sterol isomerase ERG2 then catalyzes the reaction which results in unsaturation at C-7 in the B ring of sterols and thus converts fecosterol to episterol. The sterol-C5-desaturases ERG3A and ERG3BB then catalyze the introduction of a C-5 double bond in the B ring to produce 5-dehydroepisterol. The C-22 sterol desaturases ERG5A and ERG5B further convert 5-dehydroepisterol into ergosta-5,7,22,24(28)-tetraen-3beta-ol by forming the C-22(23) double bond in the sterol side chain. Finally, ergosta-5,7,22,24(28)-tetraen-3beta-ol is substrate of the C-24(28) sterol reductase ERG4 to produce ergosterol (Probable).</text>
</comment>
<comment type="catalytic activity">
    <reaction evidence="9">
        <text>4,4-dimethyl-5alpha-cholesta-8,24-dien-3beta-ol + NADP(+) = 4,4-dimethyl-5alpha-cholesta-8,14,24-trien-3beta-ol + NADPH + H(+)</text>
        <dbReference type="Rhea" id="RHEA:18561"/>
        <dbReference type="ChEBI" id="CHEBI:15378"/>
        <dbReference type="ChEBI" id="CHEBI:17813"/>
        <dbReference type="ChEBI" id="CHEBI:18364"/>
        <dbReference type="ChEBI" id="CHEBI:57783"/>
        <dbReference type="ChEBI" id="CHEBI:58349"/>
        <dbReference type="EC" id="1.3.1.70"/>
    </reaction>
</comment>
<comment type="pathway">
    <text evidence="9">Steroid metabolism; ergosterol biosynthesis.</text>
</comment>
<comment type="subcellular location">
    <subcellularLocation>
        <location evidence="8">Endoplasmic reticulum membrane</location>
        <topology evidence="2">Multi-pass membrane protein</topology>
    </subcellularLocation>
</comment>
<comment type="induction">
    <text evidence="5">Expression is increased in the absence of the C-24(28) sterol reductase ERG4.</text>
</comment>
<comment type="disruption phenotype">
    <text evidence="4">In contrast to the disruption of ERG24B, does not affect sensitivity to amine fungicides.</text>
</comment>
<comment type="miscellaneous">
    <text evidence="6">In Fusarium, the biosynthesis pathway of the sterol precursors leading to the prevalent sterol ergosterol differs from yeast. The ringsystem of lanosterol in S.cerevisiae is firstly demethylised in three enzymatic steps leading to the intermediate zymosterol and secondly a methyl group is added to zymosterol by the sterol 24-C-methyltransferase to form fecosterol. In Fusarium, lanosterol is firstly transmethylated by the sterol 24-C-methyltransferase leading to the intermediate eburicol and secondly demethylated in three steps to form fecosterol.</text>
</comment>
<comment type="similarity">
    <text evidence="8">Belongs to the ERG4/ERG24 family.</text>
</comment>
<reference key="1">
    <citation type="journal article" date="2007" name="Science">
        <title>The Fusarium graminearum genome reveals a link between localized polymorphism and pathogen specialization.</title>
        <authorList>
            <person name="Cuomo C.A."/>
            <person name="Gueldener U."/>
            <person name="Xu J.-R."/>
            <person name="Trail F."/>
            <person name="Turgeon B.G."/>
            <person name="Di Pietro A."/>
            <person name="Walton J.D."/>
            <person name="Ma L.-J."/>
            <person name="Baker S.E."/>
            <person name="Rep M."/>
            <person name="Adam G."/>
            <person name="Antoniw J."/>
            <person name="Baldwin T."/>
            <person name="Calvo S.E."/>
            <person name="Chang Y.-L."/>
            <person name="DeCaprio D."/>
            <person name="Gale L.R."/>
            <person name="Gnerre S."/>
            <person name="Goswami R.S."/>
            <person name="Hammond-Kosack K."/>
            <person name="Harris L.J."/>
            <person name="Hilburn K."/>
            <person name="Kennell J.C."/>
            <person name="Kroken S."/>
            <person name="Magnuson J.K."/>
            <person name="Mannhaupt G."/>
            <person name="Mauceli E.W."/>
            <person name="Mewes H.-W."/>
            <person name="Mitterbauer R."/>
            <person name="Muehlbauer G."/>
            <person name="Muensterkoetter M."/>
            <person name="Nelson D."/>
            <person name="O'Donnell K."/>
            <person name="Ouellet T."/>
            <person name="Qi W."/>
            <person name="Quesneville H."/>
            <person name="Roncero M.I.G."/>
            <person name="Seong K.-Y."/>
            <person name="Tetko I.V."/>
            <person name="Urban M."/>
            <person name="Waalwijk C."/>
            <person name="Ward T.J."/>
            <person name="Yao J."/>
            <person name="Birren B.W."/>
            <person name="Kistler H.C."/>
        </authorList>
    </citation>
    <scope>NUCLEOTIDE SEQUENCE [LARGE SCALE GENOMIC DNA]</scope>
    <source>
        <strain>ATCC MYA-4620 / CBS 123657 / FGSC 9075 / NRRL 31084 / PH-1</strain>
    </source>
</reference>
<reference key="2">
    <citation type="journal article" date="2010" name="Nature">
        <title>Comparative genomics reveals mobile pathogenicity chromosomes in Fusarium.</title>
        <authorList>
            <person name="Ma L.-J."/>
            <person name="van der Does H.C."/>
            <person name="Borkovich K.A."/>
            <person name="Coleman J.J."/>
            <person name="Daboussi M.-J."/>
            <person name="Di Pietro A."/>
            <person name="Dufresne M."/>
            <person name="Freitag M."/>
            <person name="Grabherr M."/>
            <person name="Henrissat B."/>
            <person name="Houterman P.M."/>
            <person name="Kang S."/>
            <person name="Shim W.-B."/>
            <person name="Woloshuk C."/>
            <person name="Xie X."/>
            <person name="Xu J.-R."/>
            <person name="Antoniw J."/>
            <person name="Baker S.E."/>
            <person name="Bluhm B.H."/>
            <person name="Breakspear A."/>
            <person name="Brown D.W."/>
            <person name="Butchko R.A.E."/>
            <person name="Chapman S."/>
            <person name="Coulson R."/>
            <person name="Coutinho P.M."/>
            <person name="Danchin E.G.J."/>
            <person name="Diener A."/>
            <person name="Gale L.R."/>
            <person name="Gardiner D.M."/>
            <person name="Goff S."/>
            <person name="Hammond-Kosack K.E."/>
            <person name="Hilburn K."/>
            <person name="Hua-Van A."/>
            <person name="Jonkers W."/>
            <person name="Kazan K."/>
            <person name="Kodira C.D."/>
            <person name="Koehrsen M."/>
            <person name="Kumar L."/>
            <person name="Lee Y.-H."/>
            <person name="Li L."/>
            <person name="Manners J.M."/>
            <person name="Miranda-Saavedra D."/>
            <person name="Mukherjee M."/>
            <person name="Park G."/>
            <person name="Park J."/>
            <person name="Park S.-Y."/>
            <person name="Proctor R.H."/>
            <person name="Regev A."/>
            <person name="Ruiz-Roldan M.C."/>
            <person name="Sain D."/>
            <person name="Sakthikumar S."/>
            <person name="Sykes S."/>
            <person name="Schwartz D.C."/>
            <person name="Turgeon B.G."/>
            <person name="Wapinski I."/>
            <person name="Yoder O."/>
            <person name="Young S."/>
            <person name="Zeng Q."/>
            <person name="Zhou S."/>
            <person name="Galagan J."/>
            <person name="Cuomo C.A."/>
            <person name="Kistler H.C."/>
            <person name="Rep M."/>
        </authorList>
    </citation>
    <scope>GENOME REANNOTATION</scope>
    <source>
        <strain>ATCC MYA-4620 / CBS 123657 / FGSC 9075 / NRRL 31084 / PH-1</strain>
    </source>
</reference>
<reference key="3">
    <citation type="journal article" date="2015" name="BMC Genomics">
        <title>The completed genome sequence of the pathogenic ascomycete fungus Fusarium graminearum.</title>
        <authorList>
            <person name="King R."/>
            <person name="Urban M."/>
            <person name="Hammond-Kosack M.C.U."/>
            <person name="Hassani-Pak K."/>
            <person name="Hammond-Kosack K.E."/>
        </authorList>
    </citation>
    <scope>NUCLEOTIDE SEQUENCE [LARGE SCALE GENOMIC DNA]</scope>
    <source>
        <strain>ATCC MYA-4620 / CBS 123657 / FGSC 9075 / NRRL 31084 / PH-1</strain>
    </source>
</reference>
<reference key="4">
    <citation type="journal article" date="2011" name="Microbiology">
        <title>A sterol C-14 reductase encoded by FgERG24B is responsible for the intrinsic resistance of Fusarium graminearum to amine fungicides.</title>
        <authorList>
            <person name="Liu X."/>
            <person name="Fu J."/>
            <person name="Yun Y."/>
            <person name="Yin Y."/>
            <person name="Ma Z."/>
        </authorList>
    </citation>
    <scope>FUNCTION</scope>
    <scope>DISRUPTION PHENOTYPE</scope>
</reference>
<reference key="5">
    <citation type="journal article" date="2013" name="Mol. Plant Pathol.">
        <title>Involvement of FgERG4 in ergosterol biosynthesis, vegetative differentiation and virulence in Fusarium graminearum.</title>
        <authorList>
            <person name="Liu X."/>
            <person name="Jiang J."/>
            <person name="Yin Y."/>
            <person name="Ma Z."/>
        </authorList>
    </citation>
    <scope>INDUCTION</scope>
</reference>
<reference key="6">
    <citation type="journal article" date="2013" name="New Phytol.">
        <title>Characterization of the sterol 14alpha-demethylases of Fusarium graminearum identifies a novel genus-specific CYP51 function.</title>
        <authorList>
            <person name="Fan J."/>
            <person name="Urban M."/>
            <person name="Parker J.E."/>
            <person name="Brewer H.C."/>
            <person name="Kelly S.L."/>
            <person name="Hammond-Kosack K.E."/>
            <person name="Fraaije B.A."/>
            <person name="Liu X."/>
            <person name="Cools H.J."/>
        </authorList>
    </citation>
    <scope>FUNCTION</scope>
    <scope>PATHWAY</scope>
</reference>
<organism>
    <name type="scientific">Gibberella zeae (strain ATCC MYA-4620 / CBS 123657 / FGSC 9075 / NRRL 31084 / PH-1)</name>
    <name type="common">Wheat head blight fungus</name>
    <name type="synonym">Fusarium graminearum</name>
    <dbReference type="NCBI Taxonomy" id="229533"/>
    <lineage>
        <taxon>Eukaryota</taxon>
        <taxon>Fungi</taxon>
        <taxon>Dikarya</taxon>
        <taxon>Ascomycota</taxon>
        <taxon>Pezizomycotina</taxon>
        <taxon>Sordariomycetes</taxon>
        <taxon>Hypocreomycetidae</taxon>
        <taxon>Hypocreales</taxon>
        <taxon>Nectriaceae</taxon>
        <taxon>Fusarium</taxon>
    </lineage>
</organism>
<protein>
    <recommendedName>
        <fullName evidence="7">Delta(14)-sterol reductase ERG24A</fullName>
        <ecNumber evidence="9">1.3.1.70</ecNumber>
    </recommendedName>
    <alternativeName>
        <fullName evidence="7">C-14 sterol reductase ERG24A</fullName>
    </alternativeName>
    <alternativeName>
        <fullName evidence="7">Ergosterol biosynthetic protein 24A</fullName>
    </alternativeName>
    <alternativeName>
        <fullName evidence="8">Sterol C14-reductase ERG24A</fullName>
    </alternativeName>
</protein>
<keyword id="KW-0256">Endoplasmic reticulum</keyword>
<keyword id="KW-0325">Glycoprotein</keyword>
<keyword id="KW-0444">Lipid biosynthesis</keyword>
<keyword id="KW-0443">Lipid metabolism</keyword>
<keyword id="KW-0472">Membrane</keyword>
<keyword id="KW-0560">Oxidoreductase</keyword>
<keyword id="KW-1185">Reference proteome</keyword>
<keyword id="KW-0752">Steroid biosynthesis</keyword>
<keyword id="KW-0753">Steroid metabolism</keyword>
<keyword id="KW-0756">Sterol biosynthesis</keyword>
<keyword id="KW-1207">Sterol metabolism</keyword>
<keyword id="KW-0812">Transmembrane</keyword>
<keyword id="KW-1133">Transmembrane helix</keyword>